<protein>
    <recommendedName>
        <fullName>Putative F-box protein At5g40050</fullName>
    </recommendedName>
</protein>
<comment type="sequence caution" evidence="2">
    <conflict type="erroneous gene model prediction">
        <sequence resource="EMBL-CDS" id="BAA97353"/>
    </conflict>
</comment>
<dbReference type="EMBL" id="AB022222">
    <property type="protein sequence ID" value="BAA97353.1"/>
    <property type="status" value="ALT_SEQ"/>
    <property type="molecule type" value="Genomic_DNA"/>
</dbReference>
<dbReference type="EMBL" id="CP002688">
    <property type="protein sequence ID" value="AED94505.1"/>
    <property type="molecule type" value="Genomic_DNA"/>
</dbReference>
<dbReference type="RefSeq" id="NP_198821.1">
    <property type="nucleotide sequence ID" value="NM_123368.1"/>
</dbReference>
<dbReference type="PaxDb" id="3702-AT5G40050.1"/>
<dbReference type="ProteomicsDB" id="230997"/>
<dbReference type="EnsemblPlants" id="AT5G40050.1">
    <property type="protein sequence ID" value="AT5G40050.1"/>
    <property type="gene ID" value="AT5G40050"/>
</dbReference>
<dbReference type="GeneID" id="834002"/>
<dbReference type="Gramene" id="AT5G40050.1">
    <property type="protein sequence ID" value="AT5G40050.1"/>
    <property type="gene ID" value="AT5G40050"/>
</dbReference>
<dbReference type="KEGG" id="ath:AT5G40050"/>
<dbReference type="Araport" id="AT5G40050"/>
<dbReference type="TAIR" id="AT5G40050"/>
<dbReference type="HOGENOM" id="CLU_010721_7_4_1"/>
<dbReference type="InParanoid" id="Q9LUK1"/>
<dbReference type="OMA" id="TIRYNDH"/>
<dbReference type="PhylomeDB" id="Q9LUK1"/>
<dbReference type="PRO" id="PR:Q9LUK1"/>
<dbReference type="Proteomes" id="UP000006548">
    <property type="component" value="Chromosome 5"/>
</dbReference>
<dbReference type="ExpressionAtlas" id="Q9LUK1">
    <property type="expression patterns" value="baseline and differential"/>
</dbReference>
<dbReference type="CDD" id="cd22160">
    <property type="entry name" value="F-box_AtFBL13-like"/>
    <property type="match status" value="1"/>
</dbReference>
<dbReference type="Gene3D" id="1.20.1280.50">
    <property type="match status" value="1"/>
</dbReference>
<dbReference type="InterPro" id="IPR036047">
    <property type="entry name" value="F-box-like_dom_sf"/>
</dbReference>
<dbReference type="InterPro" id="IPR053781">
    <property type="entry name" value="F-box_AtFBL13-like"/>
</dbReference>
<dbReference type="InterPro" id="IPR001810">
    <property type="entry name" value="F-box_dom"/>
</dbReference>
<dbReference type="InterPro" id="IPR006566">
    <property type="entry name" value="FBD"/>
</dbReference>
<dbReference type="InterPro" id="IPR055294">
    <property type="entry name" value="FBL60-like"/>
</dbReference>
<dbReference type="PANTHER" id="PTHR31293:SF26">
    <property type="entry name" value="(RAPE) HYPOTHETICAL PROTEIN"/>
    <property type="match status" value="1"/>
</dbReference>
<dbReference type="PANTHER" id="PTHR31293">
    <property type="entry name" value="RNI-LIKE SUPERFAMILY PROTEIN"/>
    <property type="match status" value="1"/>
</dbReference>
<dbReference type="Pfam" id="PF00646">
    <property type="entry name" value="F-box"/>
    <property type="match status" value="1"/>
</dbReference>
<dbReference type="SMART" id="SM00579">
    <property type="entry name" value="FBD"/>
    <property type="match status" value="1"/>
</dbReference>
<dbReference type="SMART" id="SM00256">
    <property type="entry name" value="FBOX"/>
    <property type="match status" value="1"/>
</dbReference>
<dbReference type="SUPFAM" id="SSF81383">
    <property type="entry name" value="F-box domain"/>
    <property type="match status" value="1"/>
</dbReference>
<dbReference type="SUPFAM" id="SSF52047">
    <property type="entry name" value="RNI-like"/>
    <property type="match status" value="1"/>
</dbReference>
<dbReference type="PROSITE" id="PS50181">
    <property type="entry name" value="FBOX"/>
    <property type="match status" value="1"/>
</dbReference>
<evidence type="ECO:0000255" key="1">
    <source>
        <dbReference type="PROSITE-ProRule" id="PRU00080"/>
    </source>
</evidence>
<evidence type="ECO:0000305" key="2"/>
<gene>
    <name type="ordered locus">At5g40050</name>
    <name type="ORF">MUD12.3</name>
</gene>
<name>FB275_ARATH</name>
<keyword id="KW-1185">Reference proteome</keyword>
<reference key="1">
    <citation type="journal article" date="2000" name="DNA Res.">
        <title>Structural analysis of Arabidopsis thaliana chromosome 5. X. Sequence features of the regions of 3,076,755 bp covered by sixty P1 and TAC clones.</title>
        <authorList>
            <person name="Sato S."/>
            <person name="Nakamura Y."/>
            <person name="Kaneko T."/>
            <person name="Katoh T."/>
            <person name="Asamizu E."/>
            <person name="Kotani H."/>
            <person name="Tabata S."/>
        </authorList>
    </citation>
    <scope>NUCLEOTIDE SEQUENCE [LARGE SCALE GENOMIC DNA]</scope>
    <source>
        <strain>cv. Columbia</strain>
    </source>
</reference>
<reference key="2">
    <citation type="journal article" date="2017" name="Plant J.">
        <title>Araport11: a complete reannotation of the Arabidopsis thaliana reference genome.</title>
        <authorList>
            <person name="Cheng C.Y."/>
            <person name="Krishnakumar V."/>
            <person name="Chan A.P."/>
            <person name="Thibaud-Nissen F."/>
            <person name="Schobel S."/>
            <person name="Town C.D."/>
        </authorList>
    </citation>
    <scope>GENOME REANNOTATION</scope>
    <source>
        <strain>cv. Columbia</strain>
    </source>
</reference>
<sequence length="415" mass="47923">METKRVLSSSGSIDSISPLPDELLSHILSFLPTKRAASTSILSKRWRTLFPLMNHLCASLYLDDTDLLYPERQTEEEYYVIHNSFRNFVDKTLSGCNNNSLKKFSLTYEDDDVQRMCLTTGMMSKALEQGVSDLELYIYMPLMYEPPRLLPDTVFINNTLVKLTLGTELCLGRSPWENLEELYIHHIYIEDRDEEFNIHTAPHYIAHNIKKLTVCYNNDVQAPRILSIYTPNLVYLDYSDYLTCLYNSENHFNDLLEARLDLAFARAGRWGDEHDTCLKIMNSITNVQILHLSCFTVENLATLHFEGSEKEYWQLLCNMIEKSPKLETLVLEGLYGISDCEVGIDGGNMVKVVEIQEYKGRLEELNQVKCFLREMENLEEVKVNTSDEIENKLQLTNDLLALLPKRSSKCNIHVL</sequence>
<accession>Q9LUK1</accession>
<organism>
    <name type="scientific">Arabidopsis thaliana</name>
    <name type="common">Mouse-ear cress</name>
    <dbReference type="NCBI Taxonomy" id="3702"/>
    <lineage>
        <taxon>Eukaryota</taxon>
        <taxon>Viridiplantae</taxon>
        <taxon>Streptophyta</taxon>
        <taxon>Embryophyta</taxon>
        <taxon>Tracheophyta</taxon>
        <taxon>Spermatophyta</taxon>
        <taxon>Magnoliopsida</taxon>
        <taxon>eudicotyledons</taxon>
        <taxon>Gunneridae</taxon>
        <taxon>Pentapetalae</taxon>
        <taxon>rosids</taxon>
        <taxon>malvids</taxon>
        <taxon>Brassicales</taxon>
        <taxon>Brassicaceae</taxon>
        <taxon>Camelineae</taxon>
        <taxon>Arabidopsis</taxon>
    </lineage>
</organism>
<feature type="chain" id="PRO_0000283541" description="Putative F-box protein At5g40050">
    <location>
        <begin position="1"/>
        <end position="415"/>
    </location>
</feature>
<feature type="domain" description="F-box" evidence="1">
    <location>
        <begin position="13"/>
        <end position="59"/>
    </location>
</feature>
<proteinExistence type="predicted"/>